<protein>
    <recommendedName>
        <fullName>Uncharacterized protein YigF</fullName>
    </recommendedName>
</protein>
<sequence>MSKEYMNDGSLSEKWKYRFNFYDQHGFPGFWGATPEYKAAFKALKVRQRLTIQMNFIAFFCSWIYLFVLGLWKKAIIVLLLGILSLFVGALIGVNILGIAVAAYVAVNTNKWFYEKEVKGLNTWSL</sequence>
<reference key="1">
    <citation type="submission" date="1993-01" db="EMBL/GenBank/DDBJ databases">
        <authorList>
            <person name="Ohmori H."/>
        </authorList>
    </citation>
    <scope>NUCLEOTIDE SEQUENCE [GENOMIC DNA]</scope>
    <source>
        <strain>K12</strain>
    </source>
</reference>
<reference key="2">
    <citation type="journal article" date="1992" name="Science">
        <title>Analysis of the Escherichia coli genome: DNA sequence of the region from 84.5 to 86.5 minutes.</title>
        <authorList>
            <person name="Daniels D.L."/>
            <person name="Plunkett G. III"/>
            <person name="Burland V.D."/>
            <person name="Blattner F.R."/>
        </authorList>
    </citation>
    <scope>NUCLEOTIDE SEQUENCE [LARGE SCALE GENOMIC DNA]</scope>
    <source>
        <strain>K12 / MG1655 / ATCC 47076</strain>
    </source>
</reference>
<reference key="3">
    <citation type="journal article" date="1997" name="Science">
        <title>The complete genome sequence of Escherichia coli K-12.</title>
        <authorList>
            <person name="Blattner F.R."/>
            <person name="Plunkett G. III"/>
            <person name="Bloch C.A."/>
            <person name="Perna N.T."/>
            <person name="Burland V."/>
            <person name="Riley M."/>
            <person name="Collado-Vides J."/>
            <person name="Glasner J.D."/>
            <person name="Rode C.K."/>
            <person name="Mayhew G.F."/>
            <person name="Gregor J."/>
            <person name="Davis N.W."/>
            <person name="Kirkpatrick H.A."/>
            <person name="Goeden M.A."/>
            <person name="Rose D.J."/>
            <person name="Mau B."/>
            <person name="Shao Y."/>
        </authorList>
    </citation>
    <scope>NUCLEOTIDE SEQUENCE [LARGE SCALE GENOMIC DNA]</scope>
    <source>
        <strain>K12 / MG1655 / ATCC 47076</strain>
    </source>
</reference>
<reference key="4">
    <citation type="journal article" date="2006" name="Mol. Syst. Biol.">
        <title>Highly accurate genome sequences of Escherichia coli K-12 strains MG1655 and W3110.</title>
        <authorList>
            <person name="Hayashi K."/>
            <person name="Morooka N."/>
            <person name="Yamamoto Y."/>
            <person name="Fujita K."/>
            <person name="Isono K."/>
            <person name="Choi S."/>
            <person name="Ohtsubo E."/>
            <person name="Baba T."/>
            <person name="Wanner B.L."/>
            <person name="Mori H."/>
            <person name="Horiuchi T."/>
        </authorList>
    </citation>
    <scope>NUCLEOTIDE SEQUENCE [LARGE SCALE GENOMIC DNA]</scope>
    <source>
        <strain>K12 / W3110 / ATCC 27325 / DSM 5911</strain>
    </source>
</reference>
<organism>
    <name type="scientific">Escherichia coli (strain K12)</name>
    <dbReference type="NCBI Taxonomy" id="83333"/>
    <lineage>
        <taxon>Bacteria</taxon>
        <taxon>Pseudomonadati</taxon>
        <taxon>Pseudomonadota</taxon>
        <taxon>Gammaproteobacteria</taxon>
        <taxon>Enterobacterales</taxon>
        <taxon>Enterobacteriaceae</taxon>
        <taxon>Escherichia</taxon>
    </lineage>
</organism>
<gene>
    <name type="primary">yigF</name>
    <name type="ordered locus">b3817</name>
    <name type="ordered locus">JW3790</name>
</gene>
<accession>P27842</accession>
<accession>Q2M8C2</accession>
<dbReference type="EMBL" id="L02122">
    <property type="protein sequence ID" value="AAD15039.1"/>
    <property type="molecule type" value="Genomic_DNA"/>
</dbReference>
<dbReference type="EMBL" id="M87049">
    <property type="protein sequence ID" value="AAA67613.1"/>
    <property type="molecule type" value="Genomic_DNA"/>
</dbReference>
<dbReference type="EMBL" id="U00096">
    <property type="protein sequence ID" value="AAC76820.1"/>
    <property type="molecule type" value="Genomic_DNA"/>
</dbReference>
<dbReference type="EMBL" id="AP009048">
    <property type="protein sequence ID" value="BAE77484.1"/>
    <property type="molecule type" value="Genomic_DNA"/>
</dbReference>
<dbReference type="PIR" id="S30707">
    <property type="entry name" value="S30707"/>
</dbReference>
<dbReference type="RefSeq" id="NP_418261.1">
    <property type="nucleotide sequence ID" value="NC_000913.3"/>
</dbReference>
<dbReference type="RefSeq" id="WP_000032581.1">
    <property type="nucleotide sequence ID" value="NZ_STEB01000021.1"/>
</dbReference>
<dbReference type="BioGRID" id="4262614">
    <property type="interactions" value="5"/>
</dbReference>
<dbReference type="FunCoup" id="P27842">
    <property type="interactions" value="6"/>
</dbReference>
<dbReference type="IntAct" id="P27842">
    <property type="interactions" value="1"/>
</dbReference>
<dbReference type="STRING" id="511145.b3817"/>
<dbReference type="PaxDb" id="511145-b3817"/>
<dbReference type="EnsemblBacteria" id="AAC76820">
    <property type="protein sequence ID" value="AAC76820"/>
    <property type="gene ID" value="b3817"/>
</dbReference>
<dbReference type="GeneID" id="948340"/>
<dbReference type="KEGG" id="ecj:JW3790"/>
<dbReference type="KEGG" id="eco:b3817"/>
<dbReference type="KEGG" id="ecoc:C3026_20660"/>
<dbReference type="PATRIC" id="fig|511145.12.peg.3933"/>
<dbReference type="EchoBASE" id="EB1432"/>
<dbReference type="eggNOG" id="ENOG5031C50">
    <property type="taxonomic scope" value="Bacteria"/>
</dbReference>
<dbReference type="HOGENOM" id="CLU_137392_0_0_6"/>
<dbReference type="InParanoid" id="P27842"/>
<dbReference type="OMA" id="ETYGAPN"/>
<dbReference type="OrthoDB" id="4727912at2"/>
<dbReference type="PhylomeDB" id="P27842"/>
<dbReference type="BioCyc" id="EcoCyc:EG11464-MONOMER"/>
<dbReference type="PRO" id="PR:P27842"/>
<dbReference type="Proteomes" id="UP000000625">
    <property type="component" value="Chromosome"/>
</dbReference>
<dbReference type="GO" id="GO:0005886">
    <property type="term" value="C:plasma membrane"/>
    <property type="evidence" value="ECO:0000314"/>
    <property type="project" value="EcoCyc"/>
</dbReference>
<dbReference type="InterPro" id="IPR024399">
    <property type="entry name" value="DUF2628"/>
</dbReference>
<dbReference type="Pfam" id="PF10947">
    <property type="entry name" value="DUF2628"/>
    <property type="match status" value="1"/>
</dbReference>
<feature type="chain" id="PRO_0000169654" description="Uncharacterized protein YigF">
    <location>
        <begin position="1"/>
        <end position="126"/>
    </location>
</feature>
<name>YIGF_ECOLI</name>
<keyword id="KW-1185">Reference proteome</keyword>
<proteinExistence type="predicted"/>